<feature type="chain" id="PRO_1000085255" description="Chaperone protein DnaJ">
    <location>
        <begin position="1"/>
        <end position="374"/>
    </location>
</feature>
<feature type="domain" description="J" evidence="1">
    <location>
        <begin position="5"/>
        <end position="70"/>
    </location>
</feature>
<feature type="repeat" description="CXXCXGXG motif">
    <location>
        <begin position="146"/>
        <end position="153"/>
    </location>
</feature>
<feature type="repeat" description="CXXCXGXG motif">
    <location>
        <begin position="163"/>
        <end position="170"/>
    </location>
</feature>
<feature type="repeat" description="CXXCXGXG motif">
    <location>
        <begin position="185"/>
        <end position="192"/>
    </location>
</feature>
<feature type="repeat" description="CXXCXGXG motif">
    <location>
        <begin position="199"/>
        <end position="206"/>
    </location>
</feature>
<feature type="zinc finger region" description="CR-type" evidence="1">
    <location>
        <begin position="133"/>
        <end position="211"/>
    </location>
</feature>
<feature type="binding site" evidence="1">
    <location>
        <position position="146"/>
    </location>
    <ligand>
        <name>Zn(2+)</name>
        <dbReference type="ChEBI" id="CHEBI:29105"/>
        <label>1</label>
    </ligand>
</feature>
<feature type="binding site" evidence="1">
    <location>
        <position position="149"/>
    </location>
    <ligand>
        <name>Zn(2+)</name>
        <dbReference type="ChEBI" id="CHEBI:29105"/>
        <label>1</label>
    </ligand>
</feature>
<feature type="binding site" evidence="1">
    <location>
        <position position="163"/>
    </location>
    <ligand>
        <name>Zn(2+)</name>
        <dbReference type="ChEBI" id="CHEBI:29105"/>
        <label>2</label>
    </ligand>
</feature>
<feature type="binding site" evidence="1">
    <location>
        <position position="166"/>
    </location>
    <ligand>
        <name>Zn(2+)</name>
        <dbReference type="ChEBI" id="CHEBI:29105"/>
        <label>2</label>
    </ligand>
</feature>
<feature type="binding site" evidence="1">
    <location>
        <position position="185"/>
    </location>
    <ligand>
        <name>Zn(2+)</name>
        <dbReference type="ChEBI" id="CHEBI:29105"/>
        <label>2</label>
    </ligand>
</feature>
<feature type="binding site" evidence="1">
    <location>
        <position position="188"/>
    </location>
    <ligand>
        <name>Zn(2+)</name>
        <dbReference type="ChEBI" id="CHEBI:29105"/>
        <label>2</label>
    </ligand>
</feature>
<feature type="binding site" evidence="1">
    <location>
        <position position="199"/>
    </location>
    <ligand>
        <name>Zn(2+)</name>
        <dbReference type="ChEBI" id="CHEBI:29105"/>
        <label>1</label>
    </ligand>
</feature>
<feature type="binding site" evidence="1">
    <location>
        <position position="202"/>
    </location>
    <ligand>
        <name>Zn(2+)</name>
        <dbReference type="ChEBI" id="CHEBI:29105"/>
        <label>1</label>
    </ligand>
</feature>
<comment type="function">
    <text evidence="1">Participates actively in the response to hyperosmotic and heat shock by preventing the aggregation of stress-denatured proteins and by disaggregating proteins, also in an autonomous, DnaK-independent fashion. Unfolded proteins bind initially to DnaJ; upon interaction with the DnaJ-bound protein, DnaK hydrolyzes its bound ATP, resulting in the formation of a stable complex. GrpE releases ADP from DnaK; ATP binding to DnaK triggers the release of the substrate protein, thus completing the reaction cycle. Several rounds of ATP-dependent interactions between DnaJ, DnaK and GrpE are required for fully efficient folding. Also involved, together with DnaK and GrpE, in the DNA replication of plasmids through activation of initiation proteins.</text>
</comment>
<comment type="cofactor">
    <cofactor evidence="1">
        <name>Zn(2+)</name>
        <dbReference type="ChEBI" id="CHEBI:29105"/>
    </cofactor>
    <text evidence="1">Binds 2 Zn(2+) ions per monomer.</text>
</comment>
<comment type="subunit">
    <text evidence="1">Homodimer.</text>
</comment>
<comment type="subcellular location">
    <subcellularLocation>
        <location evidence="1">Cytoplasm</location>
    </subcellularLocation>
</comment>
<comment type="domain">
    <text evidence="1">The J domain is necessary and sufficient to stimulate DnaK ATPase activity. Zinc center 1 plays an important role in the autonomous, DnaK-independent chaperone activity of DnaJ. Zinc center 2 is essential for interaction with DnaK and for DnaJ activity.</text>
</comment>
<comment type="similarity">
    <text evidence="1">Belongs to the DnaJ family.</text>
</comment>
<accession>B0KIS4</accession>
<evidence type="ECO:0000255" key="1">
    <source>
        <dbReference type="HAMAP-Rule" id="MF_01152"/>
    </source>
</evidence>
<sequence>MSKRDYYEVLGVERGASEADLKKAYRRLAMKYHPDRNPGDKESEDKFKEANEAYEVLSDASKRAAFDQYGHAGVDPSMGGGGAGFGGANFSDIFGDVFSDFFGGGRGGGRGGAQRGSDLRYTLELNLEEAVRGTTVSIRVPTLVNCQPCDGSGAKKGSTPSTCPTCGGIGQVRMQQGFFSVQQTCPRCHGQGKIITDPCTSCHGEGRVEEYKTLSVKVPAGVDTGDRIRLSGEGEAGTHGGPTGDLYVVISVREHEIFQRDGKHLYCEVPISYTDAALGGELEVPTLDGRVKLKIPEGTQTGKQFRLRGKGVAPVRGGGAGDLLCRVAVETPVNLSRRQRELLEELRDSLEGDSSHSPKASGWFDGVKRFFGDL</sequence>
<reference key="1">
    <citation type="submission" date="2008-01" db="EMBL/GenBank/DDBJ databases">
        <title>Complete sequence of Pseudomonas putida GB-1.</title>
        <authorList>
            <consortium name="US DOE Joint Genome Institute"/>
            <person name="Copeland A."/>
            <person name="Lucas S."/>
            <person name="Lapidus A."/>
            <person name="Barry K."/>
            <person name="Glavina del Rio T."/>
            <person name="Dalin E."/>
            <person name="Tice H."/>
            <person name="Pitluck S."/>
            <person name="Bruce D."/>
            <person name="Goodwin L."/>
            <person name="Chertkov O."/>
            <person name="Brettin T."/>
            <person name="Detter J.C."/>
            <person name="Han C."/>
            <person name="Kuske C.R."/>
            <person name="Schmutz J."/>
            <person name="Larimer F."/>
            <person name="Land M."/>
            <person name="Hauser L."/>
            <person name="Kyrpides N."/>
            <person name="Kim E."/>
            <person name="McCarthy J.K."/>
            <person name="Richardson P."/>
        </authorList>
    </citation>
    <scope>NUCLEOTIDE SEQUENCE [LARGE SCALE GENOMIC DNA]</scope>
    <source>
        <strain>GB-1</strain>
    </source>
</reference>
<protein>
    <recommendedName>
        <fullName evidence="1">Chaperone protein DnaJ</fullName>
    </recommendedName>
</protein>
<dbReference type="EMBL" id="CP000926">
    <property type="protein sequence ID" value="ABZ00614.1"/>
    <property type="molecule type" value="Genomic_DNA"/>
</dbReference>
<dbReference type="RefSeq" id="WP_012274254.1">
    <property type="nucleotide sequence ID" value="NC_010322.1"/>
</dbReference>
<dbReference type="SMR" id="B0KIS4"/>
<dbReference type="GeneID" id="49870788"/>
<dbReference type="KEGG" id="ppg:PputGB1_4727"/>
<dbReference type="eggNOG" id="COG0484">
    <property type="taxonomic scope" value="Bacteria"/>
</dbReference>
<dbReference type="HOGENOM" id="CLU_017633_0_7_6"/>
<dbReference type="Proteomes" id="UP000002157">
    <property type="component" value="Chromosome"/>
</dbReference>
<dbReference type="GO" id="GO:0005737">
    <property type="term" value="C:cytoplasm"/>
    <property type="evidence" value="ECO:0007669"/>
    <property type="project" value="UniProtKB-SubCell"/>
</dbReference>
<dbReference type="GO" id="GO:0005524">
    <property type="term" value="F:ATP binding"/>
    <property type="evidence" value="ECO:0007669"/>
    <property type="project" value="InterPro"/>
</dbReference>
<dbReference type="GO" id="GO:0031072">
    <property type="term" value="F:heat shock protein binding"/>
    <property type="evidence" value="ECO:0007669"/>
    <property type="project" value="InterPro"/>
</dbReference>
<dbReference type="GO" id="GO:0051082">
    <property type="term" value="F:unfolded protein binding"/>
    <property type="evidence" value="ECO:0007669"/>
    <property type="project" value="UniProtKB-UniRule"/>
</dbReference>
<dbReference type="GO" id="GO:0008270">
    <property type="term" value="F:zinc ion binding"/>
    <property type="evidence" value="ECO:0007669"/>
    <property type="project" value="UniProtKB-UniRule"/>
</dbReference>
<dbReference type="GO" id="GO:0051085">
    <property type="term" value="P:chaperone cofactor-dependent protein refolding"/>
    <property type="evidence" value="ECO:0007669"/>
    <property type="project" value="TreeGrafter"/>
</dbReference>
<dbReference type="GO" id="GO:0006260">
    <property type="term" value="P:DNA replication"/>
    <property type="evidence" value="ECO:0007669"/>
    <property type="project" value="UniProtKB-KW"/>
</dbReference>
<dbReference type="GO" id="GO:0042026">
    <property type="term" value="P:protein refolding"/>
    <property type="evidence" value="ECO:0007669"/>
    <property type="project" value="TreeGrafter"/>
</dbReference>
<dbReference type="GO" id="GO:0009408">
    <property type="term" value="P:response to heat"/>
    <property type="evidence" value="ECO:0007669"/>
    <property type="project" value="InterPro"/>
</dbReference>
<dbReference type="CDD" id="cd06257">
    <property type="entry name" value="DnaJ"/>
    <property type="match status" value="1"/>
</dbReference>
<dbReference type="CDD" id="cd10747">
    <property type="entry name" value="DnaJ_C"/>
    <property type="match status" value="1"/>
</dbReference>
<dbReference type="CDD" id="cd10719">
    <property type="entry name" value="DnaJ_zf"/>
    <property type="match status" value="1"/>
</dbReference>
<dbReference type="FunFam" id="1.10.287.110:FF:000051">
    <property type="entry name" value="Molecular chaperone DnaJ"/>
    <property type="match status" value="1"/>
</dbReference>
<dbReference type="FunFam" id="2.10.230.10:FF:000002">
    <property type="entry name" value="Molecular chaperone DnaJ"/>
    <property type="match status" value="1"/>
</dbReference>
<dbReference type="FunFam" id="2.60.260.20:FF:000004">
    <property type="entry name" value="Molecular chaperone DnaJ"/>
    <property type="match status" value="1"/>
</dbReference>
<dbReference type="Gene3D" id="1.10.287.110">
    <property type="entry name" value="DnaJ domain"/>
    <property type="match status" value="1"/>
</dbReference>
<dbReference type="Gene3D" id="2.10.230.10">
    <property type="entry name" value="Heat shock protein DnaJ, cysteine-rich domain"/>
    <property type="match status" value="1"/>
</dbReference>
<dbReference type="Gene3D" id="2.60.260.20">
    <property type="entry name" value="Urease metallochaperone UreE, N-terminal domain"/>
    <property type="match status" value="2"/>
</dbReference>
<dbReference type="HAMAP" id="MF_01152">
    <property type="entry name" value="DnaJ"/>
    <property type="match status" value="1"/>
</dbReference>
<dbReference type="InterPro" id="IPR012724">
    <property type="entry name" value="DnaJ"/>
</dbReference>
<dbReference type="InterPro" id="IPR002939">
    <property type="entry name" value="DnaJ_C"/>
</dbReference>
<dbReference type="InterPro" id="IPR001623">
    <property type="entry name" value="DnaJ_domain"/>
</dbReference>
<dbReference type="InterPro" id="IPR018253">
    <property type="entry name" value="DnaJ_domain_CS"/>
</dbReference>
<dbReference type="InterPro" id="IPR008971">
    <property type="entry name" value="HSP40/DnaJ_pept-bd"/>
</dbReference>
<dbReference type="InterPro" id="IPR001305">
    <property type="entry name" value="HSP_DnaJ_Cys-rich_dom"/>
</dbReference>
<dbReference type="InterPro" id="IPR036410">
    <property type="entry name" value="HSP_DnaJ_Cys-rich_dom_sf"/>
</dbReference>
<dbReference type="InterPro" id="IPR036869">
    <property type="entry name" value="J_dom_sf"/>
</dbReference>
<dbReference type="NCBIfam" id="TIGR02349">
    <property type="entry name" value="DnaJ_bact"/>
    <property type="match status" value="1"/>
</dbReference>
<dbReference type="NCBIfam" id="NF008035">
    <property type="entry name" value="PRK10767.1"/>
    <property type="match status" value="1"/>
</dbReference>
<dbReference type="PANTHER" id="PTHR43096:SF48">
    <property type="entry name" value="CHAPERONE PROTEIN DNAJ"/>
    <property type="match status" value="1"/>
</dbReference>
<dbReference type="PANTHER" id="PTHR43096">
    <property type="entry name" value="DNAJ HOMOLOG 1, MITOCHONDRIAL-RELATED"/>
    <property type="match status" value="1"/>
</dbReference>
<dbReference type="Pfam" id="PF00226">
    <property type="entry name" value="DnaJ"/>
    <property type="match status" value="1"/>
</dbReference>
<dbReference type="Pfam" id="PF01556">
    <property type="entry name" value="DnaJ_C"/>
    <property type="match status" value="1"/>
</dbReference>
<dbReference type="Pfam" id="PF00684">
    <property type="entry name" value="DnaJ_CXXCXGXG"/>
    <property type="match status" value="1"/>
</dbReference>
<dbReference type="PRINTS" id="PR00625">
    <property type="entry name" value="JDOMAIN"/>
</dbReference>
<dbReference type="SMART" id="SM00271">
    <property type="entry name" value="DnaJ"/>
    <property type="match status" value="1"/>
</dbReference>
<dbReference type="SUPFAM" id="SSF46565">
    <property type="entry name" value="Chaperone J-domain"/>
    <property type="match status" value="1"/>
</dbReference>
<dbReference type="SUPFAM" id="SSF57938">
    <property type="entry name" value="DnaJ/Hsp40 cysteine-rich domain"/>
    <property type="match status" value="1"/>
</dbReference>
<dbReference type="SUPFAM" id="SSF49493">
    <property type="entry name" value="HSP40/DnaJ peptide-binding domain"/>
    <property type="match status" value="2"/>
</dbReference>
<dbReference type="PROSITE" id="PS00636">
    <property type="entry name" value="DNAJ_1"/>
    <property type="match status" value="1"/>
</dbReference>
<dbReference type="PROSITE" id="PS50076">
    <property type="entry name" value="DNAJ_2"/>
    <property type="match status" value="1"/>
</dbReference>
<dbReference type="PROSITE" id="PS51188">
    <property type="entry name" value="ZF_CR"/>
    <property type="match status" value="1"/>
</dbReference>
<name>DNAJ_PSEPG</name>
<proteinExistence type="inferred from homology"/>
<organism>
    <name type="scientific">Pseudomonas putida (strain GB-1)</name>
    <dbReference type="NCBI Taxonomy" id="76869"/>
    <lineage>
        <taxon>Bacteria</taxon>
        <taxon>Pseudomonadati</taxon>
        <taxon>Pseudomonadota</taxon>
        <taxon>Gammaproteobacteria</taxon>
        <taxon>Pseudomonadales</taxon>
        <taxon>Pseudomonadaceae</taxon>
        <taxon>Pseudomonas</taxon>
    </lineage>
</organism>
<gene>
    <name evidence="1" type="primary">dnaJ</name>
    <name type="ordered locus">PputGB1_4727</name>
</gene>
<keyword id="KW-0143">Chaperone</keyword>
<keyword id="KW-0963">Cytoplasm</keyword>
<keyword id="KW-0235">DNA replication</keyword>
<keyword id="KW-0479">Metal-binding</keyword>
<keyword id="KW-0677">Repeat</keyword>
<keyword id="KW-0346">Stress response</keyword>
<keyword id="KW-0862">Zinc</keyword>
<keyword id="KW-0863">Zinc-finger</keyword>